<protein>
    <recommendedName>
        <fullName evidence="2">Ribulose bisphosphate carboxylase large chain</fullName>
        <shortName evidence="2">RuBisCO large subunit</shortName>
        <ecNumber evidence="2">4.1.1.39</ecNumber>
    </recommendedName>
</protein>
<keyword id="KW-0113">Calvin cycle</keyword>
<keyword id="KW-0120">Carbon dioxide fixation</keyword>
<keyword id="KW-0150">Chloroplast</keyword>
<keyword id="KW-1015">Disulfide bond</keyword>
<keyword id="KW-0456">Lyase</keyword>
<keyword id="KW-0460">Magnesium</keyword>
<keyword id="KW-0479">Metal-binding</keyword>
<keyword id="KW-0503">Monooxygenase</keyword>
<keyword id="KW-0560">Oxidoreductase</keyword>
<keyword id="KW-0597">Phosphoprotein</keyword>
<keyword id="KW-0601">Photorespiration</keyword>
<keyword id="KW-0602">Photosynthesis</keyword>
<keyword id="KW-0934">Plastid</keyword>
<comment type="function">
    <text evidence="2">RuBisCO catalyzes two reactions: the carboxylation of D-ribulose 1,5-bisphosphate, the primary event in carbon dioxide fixation, as well as the oxidative fragmentation of the pentose substrate in the photorespiration process. Both reactions occur simultaneously and in competition at the same active site.</text>
</comment>
<comment type="catalytic activity">
    <reaction evidence="2">
        <text>2 (2R)-3-phosphoglycerate + 2 H(+) = D-ribulose 1,5-bisphosphate + CO2 + H2O</text>
        <dbReference type="Rhea" id="RHEA:23124"/>
        <dbReference type="ChEBI" id="CHEBI:15377"/>
        <dbReference type="ChEBI" id="CHEBI:15378"/>
        <dbReference type="ChEBI" id="CHEBI:16526"/>
        <dbReference type="ChEBI" id="CHEBI:57870"/>
        <dbReference type="ChEBI" id="CHEBI:58272"/>
        <dbReference type="EC" id="4.1.1.39"/>
    </reaction>
</comment>
<comment type="catalytic activity">
    <reaction evidence="2">
        <text>D-ribulose 1,5-bisphosphate + O2 = 2-phosphoglycolate + (2R)-3-phosphoglycerate + 2 H(+)</text>
        <dbReference type="Rhea" id="RHEA:36631"/>
        <dbReference type="ChEBI" id="CHEBI:15378"/>
        <dbReference type="ChEBI" id="CHEBI:15379"/>
        <dbReference type="ChEBI" id="CHEBI:57870"/>
        <dbReference type="ChEBI" id="CHEBI:58033"/>
        <dbReference type="ChEBI" id="CHEBI:58272"/>
    </reaction>
</comment>
<comment type="cofactor">
    <cofactor evidence="2">
        <name>Mg(2+)</name>
        <dbReference type="ChEBI" id="CHEBI:18420"/>
    </cofactor>
    <text evidence="2">Binds 1 Mg(2+) ion per subunit.</text>
</comment>
<comment type="subunit">
    <text evidence="2">Heterohexadecamer of 8 large chains and 8 small chains; disulfide-linked. The disulfide link is formed within the large subunit homodimers.</text>
</comment>
<comment type="subcellular location">
    <subcellularLocation>
        <location>Plastid</location>
        <location>Chloroplast</location>
    </subcellularLocation>
</comment>
<comment type="PTM">
    <text evidence="2">The disulfide bond which can form in the large chain dimeric partners within the hexadecamer appears to be associated with oxidative stress and protein turnover.</text>
</comment>
<comment type="miscellaneous">
    <text evidence="2">The basic functional RuBisCO is composed of a large chain homodimer in a 'head-to-tail' conformation. In form I RuBisCO this homodimer is arranged in a barrel-like tetramer with the small subunits forming a tetrameric 'cap' on each end of the 'barrel'.</text>
</comment>
<comment type="similarity">
    <text evidence="2">Belongs to the RuBisCO large chain family. Type I subfamily.</text>
</comment>
<reference key="1">
    <citation type="submission" date="2007-03" db="EMBL/GenBank/DDBJ databases">
        <title>Sequencing analysis of Aethionema grandiflorum chloroplast DNA.</title>
        <authorList>
            <person name="Hosouchi T."/>
            <person name="Tsuruoka H."/>
            <person name="Kotani H."/>
        </authorList>
    </citation>
    <scope>NUCLEOTIDE SEQUENCE [LARGE SCALE GENOMIC DNA]</scope>
</reference>
<name>RBL_AETGR</name>
<dbReference type="EC" id="4.1.1.39" evidence="2"/>
<dbReference type="EMBL" id="AP009367">
    <property type="protein sequence ID" value="BAF49862.1"/>
    <property type="molecule type" value="Genomic_DNA"/>
</dbReference>
<dbReference type="RefSeq" id="YP_001123038.1">
    <property type="nucleotide sequence ID" value="NC_009266.1"/>
</dbReference>
<dbReference type="SMR" id="A4QJK7"/>
<dbReference type="GeneID" id="4962332"/>
<dbReference type="GO" id="GO:0009507">
    <property type="term" value="C:chloroplast"/>
    <property type="evidence" value="ECO:0007669"/>
    <property type="project" value="UniProtKB-SubCell"/>
</dbReference>
<dbReference type="GO" id="GO:0000287">
    <property type="term" value="F:magnesium ion binding"/>
    <property type="evidence" value="ECO:0007669"/>
    <property type="project" value="UniProtKB-UniRule"/>
</dbReference>
<dbReference type="GO" id="GO:0004497">
    <property type="term" value="F:monooxygenase activity"/>
    <property type="evidence" value="ECO:0007669"/>
    <property type="project" value="UniProtKB-KW"/>
</dbReference>
<dbReference type="GO" id="GO:0016984">
    <property type="term" value="F:ribulose-bisphosphate carboxylase activity"/>
    <property type="evidence" value="ECO:0007669"/>
    <property type="project" value="UniProtKB-UniRule"/>
</dbReference>
<dbReference type="GO" id="GO:0009853">
    <property type="term" value="P:photorespiration"/>
    <property type="evidence" value="ECO:0007669"/>
    <property type="project" value="UniProtKB-KW"/>
</dbReference>
<dbReference type="GO" id="GO:0019253">
    <property type="term" value="P:reductive pentose-phosphate cycle"/>
    <property type="evidence" value="ECO:0007669"/>
    <property type="project" value="UniProtKB-UniRule"/>
</dbReference>
<dbReference type="CDD" id="cd08212">
    <property type="entry name" value="RuBisCO_large_I"/>
    <property type="match status" value="1"/>
</dbReference>
<dbReference type="FunFam" id="3.20.20.110:FF:000001">
    <property type="entry name" value="Ribulose bisphosphate carboxylase large chain"/>
    <property type="match status" value="1"/>
</dbReference>
<dbReference type="FunFam" id="3.30.70.150:FF:000001">
    <property type="entry name" value="Ribulose bisphosphate carboxylase large chain"/>
    <property type="match status" value="1"/>
</dbReference>
<dbReference type="Gene3D" id="3.20.20.110">
    <property type="entry name" value="Ribulose bisphosphate carboxylase, large subunit, C-terminal domain"/>
    <property type="match status" value="1"/>
</dbReference>
<dbReference type="Gene3D" id="3.30.70.150">
    <property type="entry name" value="RuBisCO large subunit, N-terminal domain"/>
    <property type="match status" value="1"/>
</dbReference>
<dbReference type="HAMAP" id="MF_01338">
    <property type="entry name" value="RuBisCO_L_type1"/>
    <property type="match status" value="1"/>
</dbReference>
<dbReference type="InterPro" id="IPR033966">
    <property type="entry name" value="RuBisCO"/>
</dbReference>
<dbReference type="InterPro" id="IPR020878">
    <property type="entry name" value="RuBisCo_large_chain_AS"/>
</dbReference>
<dbReference type="InterPro" id="IPR000685">
    <property type="entry name" value="RuBisCO_lsu_C"/>
</dbReference>
<dbReference type="InterPro" id="IPR036376">
    <property type="entry name" value="RuBisCO_lsu_C_sf"/>
</dbReference>
<dbReference type="InterPro" id="IPR017443">
    <property type="entry name" value="RuBisCO_lsu_fd_N"/>
</dbReference>
<dbReference type="InterPro" id="IPR036422">
    <property type="entry name" value="RuBisCO_lsu_N_sf"/>
</dbReference>
<dbReference type="InterPro" id="IPR020888">
    <property type="entry name" value="RuBisCO_lsuI"/>
</dbReference>
<dbReference type="NCBIfam" id="NF003252">
    <property type="entry name" value="PRK04208.1"/>
    <property type="match status" value="1"/>
</dbReference>
<dbReference type="PANTHER" id="PTHR42704">
    <property type="entry name" value="RIBULOSE BISPHOSPHATE CARBOXYLASE"/>
    <property type="match status" value="1"/>
</dbReference>
<dbReference type="PANTHER" id="PTHR42704:SF16">
    <property type="entry name" value="RIBULOSE BISPHOSPHATE CARBOXYLASE LARGE CHAIN"/>
    <property type="match status" value="1"/>
</dbReference>
<dbReference type="Pfam" id="PF00016">
    <property type="entry name" value="RuBisCO_large"/>
    <property type="match status" value="1"/>
</dbReference>
<dbReference type="Pfam" id="PF02788">
    <property type="entry name" value="RuBisCO_large_N"/>
    <property type="match status" value="1"/>
</dbReference>
<dbReference type="SFLD" id="SFLDG01052">
    <property type="entry name" value="RuBisCO"/>
    <property type="match status" value="1"/>
</dbReference>
<dbReference type="SFLD" id="SFLDS00014">
    <property type="entry name" value="RuBisCO"/>
    <property type="match status" value="1"/>
</dbReference>
<dbReference type="SFLD" id="SFLDG00301">
    <property type="entry name" value="RuBisCO-like_proteins"/>
    <property type="match status" value="1"/>
</dbReference>
<dbReference type="SUPFAM" id="SSF51649">
    <property type="entry name" value="RuBisCo, C-terminal domain"/>
    <property type="match status" value="1"/>
</dbReference>
<dbReference type="SUPFAM" id="SSF54966">
    <property type="entry name" value="RuBisCO, large subunit, small (N-terminal) domain"/>
    <property type="match status" value="1"/>
</dbReference>
<dbReference type="PROSITE" id="PS00157">
    <property type="entry name" value="RUBISCO_LARGE"/>
    <property type="match status" value="1"/>
</dbReference>
<geneLocation type="chloroplast"/>
<feature type="propeptide" id="PRO_0000299979" evidence="2">
    <location>
        <begin position="1"/>
        <end position="2"/>
    </location>
</feature>
<feature type="chain" id="PRO_0000299980" description="Ribulose bisphosphate carboxylase large chain">
    <location>
        <begin position="3"/>
        <end position="486"/>
    </location>
</feature>
<feature type="active site" description="Proton acceptor" evidence="2">
    <location>
        <position position="175"/>
    </location>
</feature>
<feature type="active site" description="Proton acceptor" evidence="2">
    <location>
        <position position="294"/>
    </location>
</feature>
<feature type="binding site" description="in homodimeric partner" evidence="2">
    <location>
        <position position="123"/>
    </location>
    <ligand>
        <name>substrate</name>
    </ligand>
</feature>
<feature type="binding site" evidence="2">
    <location>
        <position position="173"/>
    </location>
    <ligand>
        <name>substrate</name>
    </ligand>
</feature>
<feature type="binding site" evidence="2">
    <location>
        <position position="177"/>
    </location>
    <ligand>
        <name>substrate</name>
    </ligand>
</feature>
<feature type="binding site" description="via carbamate group" evidence="2">
    <location>
        <position position="201"/>
    </location>
    <ligand>
        <name>Mg(2+)</name>
        <dbReference type="ChEBI" id="CHEBI:18420"/>
    </ligand>
</feature>
<feature type="binding site" evidence="2">
    <location>
        <position position="203"/>
    </location>
    <ligand>
        <name>Mg(2+)</name>
        <dbReference type="ChEBI" id="CHEBI:18420"/>
    </ligand>
</feature>
<feature type="binding site" evidence="2">
    <location>
        <position position="204"/>
    </location>
    <ligand>
        <name>Mg(2+)</name>
        <dbReference type="ChEBI" id="CHEBI:18420"/>
    </ligand>
</feature>
<feature type="binding site" evidence="2">
    <location>
        <position position="295"/>
    </location>
    <ligand>
        <name>substrate</name>
    </ligand>
</feature>
<feature type="binding site" evidence="2">
    <location>
        <position position="327"/>
    </location>
    <ligand>
        <name>substrate</name>
    </ligand>
</feature>
<feature type="binding site" evidence="2">
    <location>
        <position position="379"/>
    </location>
    <ligand>
        <name>substrate</name>
    </ligand>
</feature>
<feature type="site" description="Transition state stabilizer" evidence="2">
    <location>
        <position position="334"/>
    </location>
</feature>
<feature type="modified residue" description="N6-carboxylysine" evidence="2">
    <location>
        <position position="201"/>
    </location>
</feature>
<feature type="modified residue" description="Phosphoserine" evidence="1">
    <location>
        <position position="208"/>
    </location>
</feature>
<feature type="modified residue" description="Phosphothreonine" evidence="1">
    <location>
        <position position="330"/>
    </location>
</feature>
<feature type="disulfide bond" description="Interchain; in linked form" evidence="2">
    <location>
        <position position="247"/>
    </location>
</feature>
<evidence type="ECO:0000250" key="1">
    <source>
        <dbReference type="UniProtKB" id="O03042"/>
    </source>
</evidence>
<evidence type="ECO:0000255" key="2">
    <source>
        <dbReference type="HAMAP-Rule" id="MF_01338"/>
    </source>
</evidence>
<organism>
    <name type="scientific">Aethionema grandiflorum</name>
    <name type="common">Persian stone-cress</name>
    <dbReference type="NCBI Taxonomy" id="72657"/>
    <lineage>
        <taxon>Eukaryota</taxon>
        <taxon>Viridiplantae</taxon>
        <taxon>Streptophyta</taxon>
        <taxon>Embryophyta</taxon>
        <taxon>Tracheophyta</taxon>
        <taxon>Spermatophyta</taxon>
        <taxon>Magnoliopsida</taxon>
        <taxon>eudicotyledons</taxon>
        <taxon>Gunneridae</taxon>
        <taxon>Pentapetalae</taxon>
        <taxon>rosids</taxon>
        <taxon>malvids</taxon>
        <taxon>Brassicales</taxon>
        <taxon>Brassicaceae</taxon>
        <taxon>Aethionemeae</taxon>
        <taxon>Aethionema</taxon>
    </lineage>
</organism>
<gene>
    <name evidence="2" type="primary">rbcL</name>
</gene>
<sequence length="486" mass="53692">MSPQTETKASVGFKAGVKEYKLTYYTPEYETKDTDILAAFRVTPQPGVPPEEAGAAVAAESSTGTWTTVWTDGLTSLDRYKGRCYHIEPVPGEESQFIAYVAYPLDLFEEGSVTNMFTSIVGNVFGFKALAALRLEDLRIPPAYTKTFQGPPHGIQVERDKLNKYGRPLLGCTIKPKLGLSAKNYGRAVYECLRGGLDFTKDDENVNSQPFMRWRDRFLFCAEAIYKSQAETGEIKGHYLNATAGTCEEMIKRAVFARELGVPIVMHDYLTGGFTANTSLAHYCRDNGLLLHIHRAMHAVIDRQKNHGMHFRVLAKALRLSGGDHIHAGTVVGKLEGDRESTLGFVDLLRDDYVEKDRSRGIFFTQDWVSLPGVLPVASGGIHVWHMPALTEIFGDDSVLQFGGGTLGHPWGNAPGAVANRVALEACVQARNEGRDLAVEGNEIIREACKWSPELAAACEVWKEIRFNFPTIDTIDKLDPSVDKVA</sequence>
<proteinExistence type="inferred from homology"/>
<accession>A4QJK7</accession>